<name>AX6A_TERSU</name>
<comment type="subcellular location">
    <subcellularLocation>
        <location>Secreted</location>
    </subcellularLocation>
</comment>
<comment type="tissue specificity">
    <text>Expressed by the venom duct.</text>
</comment>
<comment type="domain">
    <text evidence="1">The presence of a 'disulfide through disulfide knot' structurally defines this protein as a knottin.</text>
</comment>
<comment type="domain">
    <text>The cysteine framework is VI/VII (C-C-CC-C-C).</text>
</comment>
<comment type="mass spectrometry" mass="4864.7" method="Electrospray" evidence="3"/>
<accession>P0C1T6</accession>
<dbReference type="GO" id="GO:0005576">
    <property type="term" value="C:extracellular region"/>
    <property type="evidence" value="ECO:0007669"/>
    <property type="project" value="UniProtKB-SubCell"/>
</dbReference>
<dbReference type="GO" id="GO:0090729">
    <property type="term" value="F:toxin activity"/>
    <property type="evidence" value="ECO:0007669"/>
    <property type="project" value="UniProtKB-KW"/>
</dbReference>
<organism>
    <name type="scientific">Terebra subulata</name>
    <name type="common">Chocolate spotted auger</name>
    <name type="synonym">Buccinum subulatum</name>
    <dbReference type="NCBI Taxonomy" id="89435"/>
    <lineage>
        <taxon>Eukaryota</taxon>
        <taxon>Metazoa</taxon>
        <taxon>Spiralia</taxon>
        <taxon>Lophotrochozoa</taxon>
        <taxon>Mollusca</taxon>
        <taxon>Gastropoda</taxon>
        <taxon>Caenogastropoda</taxon>
        <taxon>Neogastropoda</taxon>
        <taxon>Conoidea</taxon>
        <taxon>Terebridae</taxon>
        <taxon>Terebra</taxon>
    </lineage>
</organism>
<sequence length="85" mass="9820">MTLTMSTVVFFSLILLTLGLQPKDKDEGVMGRSRLGKRGLLMRSLDEELKSNDCPEYCPHGNECCEHHECRYDPWSRELKCLDSR</sequence>
<feature type="signal peptide" evidence="2">
    <location>
        <begin position="1"/>
        <end position="20"/>
    </location>
</feature>
<feature type="propeptide" id="PRO_0000249193" evidence="3">
    <location>
        <begin position="21"/>
        <end position="43"/>
    </location>
</feature>
<feature type="chain" id="PRO_0000249194" description="Augerpeptide-s6a">
    <location>
        <begin position="44"/>
        <end position="84"/>
    </location>
</feature>
<feature type="disulfide bond" evidence="1">
    <location>
        <begin position="54"/>
        <end position="65"/>
    </location>
</feature>
<feature type="disulfide bond" evidence="1">
    <location>
        <begin position="58"/>
        <end position="70"/>
    </location>
</feature>
<feature type="disulfide bond" evidence="1">
    <location>
        <begin position="64"/>
        <end position="81"/>
    </location>
</feature>
<proteinExistence type="evidence at protein level"/>
<reference key="1">
    <citation type="journal article" date="2003" name="Toxicon">
        <title>The augertoxins: biochemical characterization of venom components from the toxoglossate gastropod Terebra subulata.</title>
        <authorList>
            <person name="Imperial J.S."/>
            <person name="Watkins M."/>
            <person name="Chen P."/>
            <person name="Hillyard D.R."/>
            <person name="Cruz L.J."/>
            <person name="Olivera B.M."/>
        </authorList>
    </citation>
    <scope>NUCLEOTIDE SEQUENCE [MRNA]</scope>
    <scope>PROTEIN SEQUENCE OF 44-84</scope>
    <scope>MASS SPECTROMETRY</scope>
    <source>
        <tissue>Venom</tissue>
        <tissue>Venom duct</tissue>
    </source>
</reference>
<protein>
    <recommendedName>
        <fullName>Augerpeptide-s6a</fullName>
        <shortName>Agx-s6a</shortName>
    </recommendedName>
</protein>
<evidence type="ECO:0000250" key="1"/>
<evidence type="ECO:0000255" key="2"/>
<evidence type="ECO:0000269" key="3">
    <source>
    </source>
</evidence>
<keyword id="KW-0165">Cleavage on pair of basic residues</keyword>
<keyword id="KW-0903">Direct protein sequencing</keyword>
<keyword id="KW-1015">Disulfide bond</keyword>
<keyword id="KW-0960">Knottin</keyword>
<keyword id="KW-0964">Secreted</keyword>
<keyword id="KW-0732">Signal</keyword>
<keyword id="KW-0800">Toxin</keyword>